<gene>
    <name evidence="1" type="primary">recA</name>
    <name type="ordered locus">BPP2633</name>
</gene>
<organism>
    <name type="scientific">Bordetella parapertussis (strain 12822 / ATCC BAA-587 / NCTC 13253)</name>
    <dbReference type="NCBI Taxonomy" id="257311"/>
    <lineage>
        <taxon>Bacteria</taxon>
        <taxon>Pseudomonadati</taxon>
        <taxon>Pseudomonadota</taxon>
        <taxon>Betaproteobacteria</taxon>
        <taxon>Burkholderiales</taxon>
        <taxon>Alcaligenaceae</taxon>
        <taxon>Bordetella</taxon>
    </lineage>
</organism>
<accession>P0A450</accession>
<accession>P17740</accession>
<comment type="function">
    <text evidence="1">Can catalyze the hydrolysis of ATP in the presence of single-stranded DNA, the ATP-dependent uptake of single-stranded DNA by duplex DNA, and the ATP-dependent hybridization of homologous single-stranded DNAs. It interacts with LexA causing its activation and leading to its autocatalytic cleavage.</text>
</comment>
<comment type="subcellular location">
    <subcellularLocation>
        <location evidence="1">Cytoplasm</location>
    </subcellularLocation>
</comment>
<comment type="similarity">
    <text evidence="1">Belongs to the RecA family.</text>
</comment>
<feature type="chain" id="PRO_0000122667" description="Protein RecA">
    <location>
        <begin position="1"/>
        <end position="353"/>
    </location>
</feature>
<feature type="binding site" evidence="1">
    <location>
        <begin position="74"/>
        <end position="81"/>
    </location>
    <ligand>
        <name>ATP</name>
        <dbReference type="ChEBI" id="CHEBI:30616"/>
    </ligand>
</feature>
<proteinExistence type="inferred from homology"/>
<protein>
    <recommendedName>
        <fullName evidence="1">Protein RecA</fullName>
    </recommendedName>
    <alternativeName>
        <fullName evidence="1">Recombinase A</fullName>
    </alternativeName>
</protein>
<keyword id="KW-0067">ATP-binding</keyword>
<keyword id="KW-0963">Cytoplasm</keyword>
<keyword id="KW-0227">DNA damage</keyword>
<keyword id="KW-0233">DNA recombination</keyword>
<keyword id="KW-0234">DNA repair</keyword>
<keyword id="KW-0238">DNA-binding</keyword>
<keyword id="KW-0547">Nucleotide-binding</keyword>
<keyword id="KW-0742">SOS response</keyword>
<evidence type="ECO:0000255" key="1">
    <source>
        <dbReference type="HAMAP-Rule" id="MF_00268"/>
    </source>
</evidence>
<name>RECA_BORPA</name>
<sequence length="353" mass="37949">MDDKTSKAAAAEKAKALAAALSQIEKQFGKGSIMRYGDNEVEHDIQVVSTGSLGLDIALGVGGLPRGRVIEVYGPESSGKTTLTLQVIAEMQKLGGTCAFVDAEHALDVQYASKLGVNLTDLLISQPDTGEQALEITDALVRSGSVDLIVIDSVAALVPKAEIEGEMGDSLPGLQARLMSQALRKLTATIKRTNCMVIFINQIRMKIGVMFGNPETTTGGNALKFYSSVRLDIRRIGAIKKGDEVVGNETRVKVVKNKVAPPFKQAEFDIMYGSGISREGEIIDLGVQANVVDKSGAWYSYSGNRIGQGKDNVREYLKEHKEMAIEIENKVRENQGIVSRAATFPASEAEDGE</sequence>
<dbReference type="EMBL" id="BX640431">
    <property type="protein sequence ID" value="CAE37925.1"/>
    <property type="molecule type" value="Genomic_DNA"/>
</dbReference>
<dbReference type="RefSeq" id="WP_003812760.1">
    <property type="nucleotide sequence ID" value="NC_002928.3"/>
</dbReference>
<dbReference type="SMR" id="P0A450"/>
<dbReference type="GeneID" id="93204418"/>
<dbReference type="KEGG" id="bpa:BPP2633"/>
<dbReference type="HOGENOM" id="CLU_040469_1_2_4"/>
<dbReference type="Proteomes" id="UP000001421">
    <property type="component" value="Chromosome"/>
</dbReference>
<dbReference type="GO" id="GO:0005829">
    <property type="term" value="C:cytosol"/>
    <property type="evidence" value="ECO:0007669"/>
    <property type="project" value="TreeGrafter"/>
</dbReference>
<dbReference type="GO" id="GO:0005524">
    <property type="term" value="F:ATP binding"/>
    <property type="evidence" value="ECO:0007669"/>
    <property type="project" value="UniProtKB-UniRule"/>
</dbReference>
<dbReference type="GO" id="GO:0016887">
    <property type="term" value="F:ATP hydrolysis activity"/>
    <property type="evidence" value="ECO:0007669"/>
    <property type="project" value="InterPro"/>
</dbReference>
<dbReference type="GO" id="GO:0140664">
    <property type="term" value="F:ATP-dependent DNA damage sensor activity"/>
    <property type="evidence" value="ECO:0007669"/>
    <property type="project" value="InterPro"/>
</dbReference>
<dbReference type="GO" id="GO:0003684">
    <property type="term" value="F:damaged DNA binding"/>
    <property type="evidence" value="ECO:0007669"/>
    <property type="project" value="UniProtKB-UniRule"/>
</dbReference>
<dbReference type="GO" id="GO:0003697">
    <property type="term" value="F:single-stranded DNA binding"/>
    <property type="evidence" value="ECO:0007669"/>
    <property type="project" value="UniProtKB-UniRule"/>
</dbReference>
<dbReference type="GO" id="GO:0006310">
    <property type="term" value="P:DNA recombination"/>
    <property type="evidence" value="ECO:0007669"/>
    <property type="project" value="UniProtKB-UniRule"/>
</dbReference>
<dbReference type="GO" id="GO:0006281">
    <property type="term" value="P:DNA repair"/>
    <property type="evidence" value="ECO:0007669"/>
    <property type="project" value="UniProtKB-UniRule"/>
</dbReference>
<dbReference type="GO" id="GO:0009432">
    <property type="term" value="P:SOS response"/>
    <property type="evidence" value="ECO:0007669"/>
    <property type="project" value="UniProtKB-UniRule"/>
</dbReference>
<dbReference type="CDD" id="cd00983">
    <property type="entry name" value="RecA"/>
    <property type="match status" value="1"/>
</dbReference>
<dbReference type="FunFam" id="3.40.50.300:FF:000087">
    <property type="entry name" value="Recombinase RecA"/>
    <property type="match status" value="1"/>
</dbReference>
<dbReference type="Gene3D" id="3.40.50.300">
    <property type="entry name" value="P-loop containing nucleotide triphosphate hydrolases"/>
    <property type="match status" value="1"/>
</dbReference>
<dbReference type="HAMAP" id="MF_00268">
    <property type="entry name" value="RecA"/>
    <property type="match status" value="1"/>
</dbReference>
<dbReference type="InterPro" id="IPR003593">
    <property type="entry name" value="AAA+_ATPase"/>
</dbReference>
<dbReference type="InterPro" id="IPR013765">
    <property type="entry name" value="DNA_recomb/repair_RecA"/>
</dbReference>
<dbReference type="InterPro" id="IPR020584">
    <property type="entry name" value="DNA_recomb/repair_RecA_CS"/>
</dbReference>
<dbReference type="InterPro" id="IPR027417">
    <property type="entry name" value="P-loop_NTPase"/>
</dbReference>
<dbReference type="InterPro" id="IPR049261">
    <property type="entry name" value="RecA-like_C"/>
</dbReference>
<dbReference type="InterPro" id="IPR049428">
    <property type="entry name" value="RecA-like_N"/>
</dbReference>
<dbReference type="InterPro" id="IPR020588">
    <property type="entry name" value="RecA_ATP-bd"/>
</dbReference>
<dbReference type="InterPro" id="IPR023400">
    <property type="entry name" value="RecA_C_sf"/>
</dbReference>
<dbReference type="InterPro" id="IPR020587">
    <property type="entry name" value="RecA_monomer-monomer_interface"/>
</dbReference>
<dbReference type="NCBIfam" id="TIGR02012">
    <property type="entry name" value="tigrfam_recA"/>
    <property type="match status" value="1"/>
</dbReference>
<dbReference type="PANTHER" id="PTHR45900:SF1">
    <property type="entry name" value="MITOCHONDRIAL DNA REPAIR PROTEIN RECA HOMOLOG-RELATED"/>
    <property type="match status" value="1"/>
</dbReference>
<dbReference type="PANTHER" id="PTHR45900">
    <property type="entry name" value="RECA"/>
    <property type="match status" value="1"/>
</dbReference>
<dbReference type="Pfam" id="PF00154">
    <property type="entry name" value="RecA"/>
    <property type="match status" value="1"/>
</dbReference>
<dbReference type="Pfam" id="PF21096">
    <property type="entry name" value="RecA_C"/>
    <property type="match status" value="1"/>
</dbReference>
<dbReference type="PRINTS" id="PR00142">
    <property type="entry name" value="RECA"/>
</dbReference>
<dbReference type="SMART" id="SM00382">
    <property type="entry name" value="AAA"/>
    <property type="match status" value="1"/>
</dbReference>
<dbReference type="SUPFAM" id="SSF52540">
    <property type="entry name" value="P-loop containing nucleoside triphosphate hydrolases"/>
    <property type="match status" value="1"/>
</dbReference>
<dbReference type="SUPFAM" id="SSF54752">
    <property type="entry name" value="RecA protein, C-terminal domain"/>
    <property type="match status" value="1"/>
</dbReference>
<dbReference type="PROSITE" id="PS00321">
    <property type="entry name" value="RECA_1"/>
    <property type="match status" value="1"/>
</dbReference>
<dbReference type="PROSITE" id="PS50162">
    <property type="entry name" value="RECA_2"/>
    <property type="match status" value="1"/>
</dbReference>
<dbReference type="PROSITE" id="PS50163">
    <property type="entry name" value="RECA_3"/>
    <property type="match status" value="1"/>
</dbReference>
<reference key="1">
    <citation type="journal article" date="2003" name="Nat. Genet.">
        <title>Comparative analysis of the genome sequences of Bordetella pertussis, Bordetella parapertussis and Bordetella bronchiseptica.</title>
        <authorList>
            <person name="Parkhill J."/>
            <person name="Sebaihia M."/>
            <person name="Preston A."/>
            <person name="Murphy L.D."/>
            <person name="Thomson N.R."/>
            <person name="Harris D.E."/>
            <person name="Holden M.T.G."/>
            <person name="Churcher C.M."/>
            <person name="Bentley S.D."/>
            <person name="Mungall K.L."/>
            <person name="Cerdeno-Tarraga A.-M."/>
            <person name="Temple L."/>
            <person name="James K.D."/>
            <person name="Harris B."/>
            <person name="Quail M.A."/>
            <person name="Achtman M."/>
            <person name="Atkin R."/>
            <person name="Baker S."/>
            <person name="Basham D."/>
            <person name="Bason N."/>
            <person name="Cherevach I."/>
            <person name="Chillingworth T."/>
            <person name="Collins M."/>
            <person name="Cronin A."/>
            <person name="Davis P."/>
            <person name="Doggett J."/>
            <person name="Feltwell T."/>
            <person name="Goble A."/>
            <person name="Hamlin N."/>
            <person name="Hauser H."/>
            <person name="Holroyd S."/>
            <person name="Jagels K."/>
            <person name="Leather S."/>
            <person name="Moule S."/>
            <person name="Norberczak H."/>
            <person name="O'Neil S."/>
            <person name="Ormond D."/>
            <person name="Price C."/>
            <person name="Rabbinowitsch E."/>
            <person name="Rutter S."/>
            <person name="Sanders M."/>
            <person name="Saunders D."/>
            <person name="Seeger K."/>
            <person name="Sharp S."/>
            <person name="Simmonds M."/>
            <person name="Skelton J."/>
            <person name="Squares R."/>
            <person name="Squares S."/>
            <person name="Stevens K."/>
            <person name="Unwin L."/>
            <person name="Whitehead S."/>
            <person name="Barrell B.G."/>
            <person name="Maskell D.J."/>
        </authorList>
    </citation>
    <scope>NUCLEOTIDE SEQUENCE [LARGE SCALE GENOMIC DNA]</scope>
    <source>
        <strain>12822 / ATCC BAA-587 / NCTC 13253</strain>
    </source>
</reference>